<protein>
    <recommendedName>
        <fullName evidence="1">4-diphosphocytidyl-2-C-methyl-D-erythritol kinase</fullName>
        <shortName evidence="1">CMK</shortName>
        <ecNumber evidence="1">2.7.1.148</ecNumber>
    </recommendedName>
    <alternativeName>
        <fullName evidence="1">4-(cytidine-5'-diphospho)-2-C-methyl-D-erythritol kinase</fullName>
    </alternativeName>
    <component>
        <recommendedName>
            <fullName>4-diphosphocytidyl-2-C-methyl-D-erythritol kinase, propeptide removed</fullName>
        </recommendedName>
    </component>
</protein>
<evidence type="ECO:0000255" key="1">
    <source>
        <dbReference type="HAMAP-Rule" id="MF_00061"/>
    </source>
</evidence>
<evidence type="ECO:0000269" key="2">
    <source>
    </source>
</evidence>
<evidence type="ECO:0007829" key="3">
    <source>
        <dbReference type="PDB" id="3PYF"/>
    </source>
</evidence>
<keyword id="KW-0002">3D-structure</keyword>
<keyword id="KW-0067">ATP-binding</keyword>
<keyword id="KW-0903">Direct protein sequencing</keyword>
<keyword id="KW-0414">Isoprene biosynthesis</keyword>
<keyword id="KW-0418">Kinase</keyword>
<keyword id="KW-0547">Nucleotide-binding</keyword>
<keyword id="KW-1185">Reference proteome</keyword>
<keyword id="KW-0808">Transferase</keyword>
<sequence length="318" mass="32613">MSASDGNTAELWVPTGSVTVRVPGKVNLYLAVGDRREDGYHELTTVFHAVSLVDEVTVRNADVLSLELVGEGADQLPTDERNLAWQAAELMAEHVGRAPDVSIMIDKSIPVAGGMAGGSADAAAVLVAMNSLWELNVPRRDLRMLAARLGSDVPFALHGGTALGTGRGEELATVLSRNTFHWVLAFADSGLLTSAVYNELDRLREVGDPPRLGEPGPVLAALAAGDPDQLAPLLGNEMQAAAVSLDPALARALRAGVEAGALAGIVSGSGPTCAFLCTSASSAIDVGAQLSGAGVCRTVRVATGPVPGARVVSAPTEV</sequence>
<feature type="initiator methionine" description="Removed" evidence="2">
    <location>
        <position position="1"/>
    </location>
</feature>
<feature type="chain" id="PRO_0000189235" description="4-diphosphocytidyl-2-C-methyl-D-erythritol kinase">
    <location>
        <begin position="2"/>
        <end position="318"/>
    </location>
</feature>
<feature type="propeptide" id="PRO_0000455339" description="Removed; alternate" evidence="2">
    <location>
        <position position="2"/>
    </location>
</feature>
<feature type="chain" id="PRO_0000455340" description="4-diphosphocytidyl-2-C-methyl-D-erythritol kinase, propeptide removed">
    <location>
        <begin position="3"/>
        <end position="318"/>
    </location>
</feature>
<feature type="active site" evidence="1">
    <location>
        <position position="25"/>
    </location>
</feature>
<feature type="active site" evidence="1">
    <location>
        <position position="152"/>
    </location>
</feature>
<feature type="binding site" evidence="1">
    <location>
        <begin position="110"/>
        <end position="120"/>
    </location>
    <ligand>
        <name>ATP</name>
        <dbReference type="ChEBI" id="CHEBI:30616"/>
    </ligand>
</feature>
<feature type="strand" evidence="3">
    <location>
        <begin position="18"/>
        <end position="32"/>
    </location>
</feature>
<feature type="strand" evidence="3">
    <location>
        <begin position="43"/>
        <end position="60"/>
    </location>
</feature>
<feature type="strand" evidence="3">
    <location>
        <begin position="65"/>
        <end position="70"/>
    </location>
</feature>
<feature type="helix" evidence="3">
    <location>
        <begin position="73"/>
        <end position="75"/>
    </location>
</feature>
<feature type="helix" evidence="3">
    <location>
        <begin position="83"/>
        <end position="94"/>
    </location>
</feature>
<feature type="strand" evidence="3">
    <location>
        <begin position="101"/>
        <end position="107"/>
    </location>
</feature>
<feature type="strand" evidence="3">
    <location>
        <begin position="113"/>
        <end position="115"/>
    </location>
</feature>
<feature type="helix" evidence="3">
    <location>
        <begin position="117"/>
        <end position="132"/>
    </location>
</feature>
<feature type="helix" evidence="3">
    <location>
        <begin position="139"/>
        <end position="149"/>
    </location>
</feature>
<feature type="helix" evidence="3">
    <location>
        <begin position="153"/>
        <end position="158"/>
    </location>
</feature>
<feature type="strand" evidence="3">
    <location>
        <begin position="159"/>
        <end position="164"/>
    </location>
</feature>
<feature type="strand" evidence="3">
    <location>
        <begin position="166"/>
        <end position="169"/>
    </location>
</feature>
<feature type="strand" evidence="3">
    <location>
        <begin position="172"/>
        <end position="174"/>
    </location>
</feature>
<feature type="strand" evidence="3">
    <location>
        <begin position="180"/>
        <end position="186"/>
    </location>
</feature>
<feature type="helix" evidence="3">
    <location>
        <begin position="193"/>
        <end position="206"/>
    </location>
</feature>
<feature type="helix" evidence="3">
    <location>
        <begin position="215"/>
        <end position="224"/>
    </location>
</feature>
<feature type="helix" evidence="3">
    <location>
        <begin position="227"/>
        <end position="230"/>
    </location>
</feature>
<feature type="helix" evidence="3">
    <location>
        <begin position="231"/>
        <end position="233"/>
    </location>
</feature>
<feature type="helix" evidence="3">
    <location>
        <begin position="239"/>
        <end position="245"/>
    </location>
</feature>
<feature type="helix" evidence="3">
    <location>
        <begin position="248"/>
        <end position="258"/>
    </location>
</feature>
<feature type="strand" evidence="3">
    <location>
        <begin position="262"/>
        <end position="266"/>
    </location>
</feature>
<feature type="strand" evidence="3">
    <location>
        <begin position="270"/>
        <end position="279"/>
    </location>
</feature>
<feature type="helix" evidence="3">
    <location>
        <begin position="280"/>
        <end position="292"/>
    </location>
</feature>
<feature type="strand" evidence="3">
    <location>
        <begin position="295"/>
        <end position="304"/>
    </location>
</feature>
<feature type="strand" evidence="3">
    <location>
        <begin position="309"/>
        <end position="311"/>
    </location>
</feature>
<accession>P9WKG7</accession>
<accession>L0T5K3</accession>
<accession>O05596</accession>
<accession>P65178</accession>
<reference key="1">
    <citation type="journal article" date="1998" name="Nature">
        <title>Deciphering the biology of Mycobacterium tuberculosis from the complete genome sequence.</title>
        <authorList>
            <person name="Cole S.T."/>
            <person name="Brosch R."/>
            <person name="Parkhill J."/>
            <person name="Garnier T."/>
            <person name="Churcher C.M."/>
            <person name="Harris D.E."/>
            <person name="Gordon S.V."/>
            <person name="Eiglmeier K."/>
            <person name="Gas S."/>
            <person name="Barry C.E. III"/>
            <person name="Tekaia F."/>
            <person name="Badcock K."/>
            <person name="Basham D."/>
            <person name="Brown D."/>
            <person name="Chillingworth T."/>
            <person name="Connor R."/>
            <person name="Davies R.M."/>
            <person name="Devlin K."/>
            <person name="Feltwell T."/>
            <person name="Gentles S."/>
            <person name="Hamlin N."/>
            <person name="Holroyd S."/>
            <person name="Hornsby T."/>
            <person name="Jagels K."/>
            <person name="Krogh A."/>
            <person name="McLean J."/>
            <person name="Moule S."/>
            <person name="Murphy L.D."/>
            <person name="Oliver S."/>
            <person name="Osborne J."/>
            <person name="Quail M.A."/>
            <person name="Rajandream M.A."/>
            <person name="Rogers J."/>
            <person name="Rutter S."/>
            <person name="Seeger K."/>
            <person name="Skelton S."/>
            <person name="Squares S."/>
            <person name="Squares R."/>
            <person name="Sulston J.E."/>
            <person name="Taylor K."/>
            <person name="Whitehead S."/>
            <person name="Barrell B.G."/>
        </authorList>
    </citation>
    <scope>NUCLEOTIDE SEQUENCE [LARGE SCALE GENOMIC DNA]</scope>
    <source>
        <strain>ATCC 25618 / H37Rv</strain>
    </source>
</reference>
<reference key="2">
    <citation type="journal article" date="2022" name="Genomics">
        <title>Deep N-terminomics of Mycobacterium tuberculosis H37Rv extensively correct annotated encoding genes.</title>
        <authorList>
            <person name="Shi J."/>
            <person name="Meng S."/>
            <person name="Wan L."/>
            <person name="Zhang Z."/>
            <person name="Jiang S."/>
            <person name="Zhu H."/>
            <person name="Dai E."/>
            <person name="Chang L."/>
            <person name="Gao H."/>
            <person name="Wan K."/>
            <person name="Zhang L."/>
            <person name="Zhao X."/>
            <person name="Liu H."/>
            <person name="Lyu Z."/>
            <person name="Zhang Y."/>
            <person name="Xu P."/>
        </authorList>
    </citation>
    <scope>PROTEIN SEQUENCE OF 2-25</scope>
    <scope>PROTEIN SEQUENCE OF 3-25</scope>
    <scope>SEQUENCE REVISION TO N-TERMINUS</scope>
    <source>
        <strain>H37Rv</strain>
    </source>
</reference>
<reference key="3">
    <citation type="journal article" date="2008" name="BMC Syst. Biol.">
        <title>targetTB: a target identification pipeline for Mycobacterium tuberculosis through an interactome, reactome and genome-scale structural analysis.</title>
        <authorList>
            <person name="Raman K."/>
            <person name="Yeturu K."/>
            <person name="Chandra N."/>
        </authorList>
    </citation>
    <scope>IDENTIFICATION AS A DRUG TARGET [LARGE SCALE ANALYSIS]</scope>
</reference>
<reference key="4">
    <citation type="journal article" date="2011" name="Mol. Cell. Proteomics">
        <title>Proteogenomic analysis of Mycobacterium tuberculosis by high resolution mass spectrometry.</title>
        <authorList>
            <person name="Kelkar D.S."/>
            <person name="Kumar D."/>
            <person name="Kumar P."/>
            <person name="Balakrishnan L."/>
            <person name="Muthusamy B."/>
            <person name="Yadav A.K."/>
            <person name="Shrivastava P."/>
            <person name="Marimuthu A."/>
            <person name="Anand S."/>
            <person name="Sundaram H."/>
            <person name="Kingsbury R."/>
            <person name="Harsha H.C."/>
            <person name="Nair B."/>
            <person name="Prasad T.S."/>
            <person name="Chauhan D.S."/>
            <person name="Katoch K."/>
            <person name="Katoch V.M."/>
            <person name="Kumar P."/>
            <person name="Chaerkady R."/>
            <person name="Ramachandran S."/>
            <person name="Dash D."/>
            <person name="Pandey A."/>
        </authorList>
    </citation>
    <scope>IDENTIFICATION BY MASS SPECTROMETRY [LARGE SCALE ANALYSIS]</scope>
    <source>
        <strain>ATCC 25618 / H37Rv</strain>
    </source>
</reference>
<comment type="function">
    <text evidence="1">Catalyzes the phosphorylation of the position 2 hydroxy group of 4-diphosphocytidyl-2C-methyl-D-erythritol.</text>
</comment>
<comment type="catalytic activity">
    <reaction evidence="1">
        <text>4-CDP-2-C-methyl-D-erythritol + ATP = 4-CDP-2-C-methyl-D-erythritol 2-phosphate + ADP + H(+)</text>
        <dbReference type="Rhea" id="RHEA:18437"/>
        <dbReference type="ChEBI" id="CHEBI:15378"/>
        <dbReference type="ChEBI" id="CHEBI:30616"/>
        <dbReference type="ChEBI" id="CHEBI:57823"/>
        <dbReference type="ChEBI" id="CHEBI:57919"/>
        <dbReference type="ChEBI" id="CHEBI:456216"/>
        <dbReference type="EC" id="2.7.1.148"/>
    </reaction>
</comment>
<comment type="pathway">
    <text evidence="1">Isoprenoid biosynthesis; isopentenyl diphosphate biosynthesis via DXP pathway; isopentenyl diphosphate from 1-deoxy-D-xylulose 5-phosphate: step 3/6.</text>
</comment>
<comment type="miscellaneous">
    <text>Was identified as a high-confidence drug target.</text>
</comment>
<comment type="similarity">
    <text evidence="1">Belongs to the GHMP kinase family. IspE subfamily.</text>
</comment>
<comment type="sequence caution" evidence="2">
    <conflict type="erroneous initiation">
        <sequence resource="EMBL-CDS" id="CCP43761"/>
    </conflict>
    <text>Truncated N-terminus.</text>
</comment>
<dbReference type="EC" id="2.7.1.148" evidence="1"/>
<dbReference type="EMBL" id="AL123456">
    <property type="protein sequence ID" value="CCP43761.1"/>
    <property type="status" value="ALT_INIT"/>
    <property type="molecule type" value="Genomic_DNA"/>
</dbReference>
<dbReference type="PIR" id="F70603">
    <property type="entry name" value="F70603"/>
</dbReference>
<dbReference type="RefSeq" id="NP_215527.1">
    <property type="nucleotide sequence ID" value="NC_000962.3"/>
</dbReference>
<dbReference type="RefSeq" id="WP_003405199.1">
    <property type="nucleotide sequence ID" value="NC_000962.3"/>
</dbReference>
<dbReference type="RefSeq" id="WP_003898690.1">
    <property type="nucleotide sequence ID" value="NZ_NVQJ01000018.1"/>
</dbReference>
<dbReference type="PDB" id="3PYD">
    <property type="method" value="X-ray"/>
    <property type="resolution" value="2.10 A"/>
    <property type="chains" value="A=17-314"/>
</dbReference>
<dbReference type="PDB" id="3PYE">
    <property type="method" value="X-ray"/>
    <property type="resolution" value="2.00 A"/>
    <property type="chains" value="A=13-313"/>
</dbReference>
<dbReference type="PDB" id="3PYF">
    <property type="method" value="X-ray"/>
    <property type="resolution" value="1.70 A"/>
    <property type="chains" value="A=17-312"/>
</dbReference>
<dbReference type="PDB" id="3PYG">
    <property type="method" value="X-ray"/>
    <property type="resolution" value="1.99 A"/>
    <property type="chains" value="A=16-313"/>
</dbReference>
<dbReference type="PDBsum" id="3PYD"/>
<dbReference type="PDBsum" id="3PYE"/>
<dbReference type="PDBsum" id="3PYF"/>
<dbReference type="PDBsum" id="3PYG"/>
<dbReference type="SMR" id="P9WKG7"/>
<dbReference type="FunCoup" id="P9WKG7">
    <property type="interactions" value="182"/>
</dbReference>
<dbReference type="STRING" id="83332.Rv1011"/>
<dbReference type="PaxDb" id="83332-Rv1011"/>
<dbReference type="GeneID" id="886034"/>
<dbReference type="KEGG" id="mtu:Rv1011"/>
<dbReference type="TubercuList" id="Rv1011"/>
<dbReference type="eggNOG" id="COG1947">
    <property type="taxonomic scope" value="Bacteria"/>
</dbReference>
<dbReference type="InParanoid" id="P9WKG7"/>
<dbReference type="OrthoDB" id="3173073at2"/>
<dbReference type="PhylomeDB" id="P9WKG7"/>
<dbReference type="BRENDA" id="2.7.1.148">
    <property type="organism ID" value="3445"/>
</dbReference>
<dbReference type="UniPathway" id="UPA00056">
    <property type="reaction ID" value="UER00094"/>
</dbReference>
<dbReference type="EvolutionaryTrace" id="P9WKG7"/>
<dbReference type="Proteomes" id="UP000001584">
    <property type="component" value="Chromosome"/>
</dbReference>
<dbReference type="GO" id="GO:0050515">
    <property type="term" value="F:4-(cytidine 5'-diphospho)-2-C-methyl-D-erythritol kinase activity"/>
    <property type="evidence" value="ECO:0000318"/>
    <property type="project" value="GO_Central"/>
</dbReference>
<dbReference type="GO" id="GO:0005524">
    <property type="term" value="F:ATP binding"/>
    <property type="evidence" value="ECO:0007669"/>
    <property type="project" value="UniProtKB-UniRule"/>
</dbReference>
<dbReference type="GO" id="GO:0019288">
    <property type="term" value="P:isopentenyl diphosphate biosynthetic process, methylerythritol 4-phosphate pathway"/>
    <property type="evidence" value="ECO:0007669"/>
    <property type="project" value="UniProtKB-UniRule"/>
</dbReference>
<dbReference type="GO" id="GO:0016114">
    <property type="term" value="P:terpenoid biosynthetic process"/>
    <property type="evidence" value="ECO:0007669"/>
    <property type="project" value="InterPro"/>
</dbReference>
<dbReference type="FunFam" id="3.30.230.10:FF:000076">
    <property type="entry name" value="4-diphosphocytidyl-2-C-methyl-D-erythritol kinase"/>
    <property type="match status" value="1"/>
</dbReference>
<dbReference type="FunFam" id="3.30.70.890:FF:000013">
    <property type="entry name" value="4-diphosphocytidyl-2-C-methyl-D-erythritol kinase"/>
    <property type="match status" value="1"/>
</dbReference>
<dbReference type="Gene3D" id="3.30.230.10">
    <property type="match status" value="1"/>
</dbReference>
<dbReference type="Gene3D" id="3.30.70.890">
    <property type="entry name" value="GHMP kinase, C-terminal domain"/>
    <property type="match status" value="1"/>
</dbReference>
<dbReference type="HAMAP" id="MF_00061">
    <property type="entry name" value="IspE"/>
    <property type="match status" value="1"/>
</dbReference>
<dbReference type="InterPro" id="IPR013750">
    <property type="entry name" value="GHMP_kinase_C_dom"/>
</dbReference>
<dbReference type="InterPro" id="IPR036554">
    <property type="entry name" value="GHMP_kinase_C_sf"/>
</dbReference>
<dbReference type="InterPro" id="IPR006204">
    <property type="entry name" value="GHMP_kinase_N_dom"/>
</dbReference>
<dbReference type="InterPro" id="IPR004424">
    <property type="entry name" value="IspE"/>
</dbReference>
<dbReference type="InterPro" id="IPR020568">
    <property type="entry name" value="Ribosomal_Su5_D2-typ_SF"/>
</dbReference>
<dbReference type="InterPro" id="IPR014721">
    <property type="entry name" value="Ribsml_uS5_D2-typ_fold_subgr"/>
</dbReference>
<dbReference type="NCBIfam" id="TIGR00154">
    <property type="entry name" value="ispE"/>
    <property type="match status" value="1"/>
</dbReference>
<dbReference type="NCBIfam" id="NF002870">
    <property type="entry name" value="PRK03188.1"/>
    <property type="match status" value="1"/>
</dbReference>
<dbReference type="PANTHER" id="PTHR43527">
    <property type="entry name" value="4-DIPHOSPHOCYTIDYL-2-C-METHYL-D-ERYTHRITOL KINASE, CHLOROPLASTIC"/>
    <property type="match status" value="1"/>
</dbReference>
<dbReference type="PANTHER" id="PTHR43527:SF2">
    <property type="entry name" value="4-DIPHOSPHOCYTIDYL-2-C-METHYL-D-ERYTHRITOL KINASE, CHLOROPLASTIC"/>
    <property type="match status" value="1"/>
</dbReference>
<dbReference type="Pfam" id="PF08544">
    <property type="entry name" value="GHMP_kinases_C"/>
    <property type="match status" value="1"/>
</dbReference>
<dbReference type="Pfam" id="PF00288">
    <property type="entry name" value="GHMP_kinases_N"/>
    <property type="match status" value="1"/>
</dbReference>
<dbReference type="PIRSF" id="PIRSF010376">
    <property type="entry name" value="IspE"/>
    <property type="match status" value="1"/>
</dbReference>
<dbReference type="SUPFAM" id="SSF55060">
    <property type="entry name" value="GHMP Kinase, C-terminal domain"/>
    <property type="match status" value="1"/>
</dbReference>
<dbReference type="SUPFAM" id="SSF54211">
    <property type="entry name" value="Ribosomal protein S5 domain 2-like"/>
    <property type="match status" value="1"/>
</dbReference>
<proteinExistence type="evidence at protein level"/>
<organism>
    <name type="scientific">Mycobacterium tuberculosis (strain ATCC 25618 / H37Rv)</name>
    <dbReference type="NCBI Taxonomy" id="83332"/>
    <lineage>
        <taxon>Bacteria</taxon>
        <taxon>Bacillati</taxon>
        <taxon>Actinomycetota</taxon>
        <taxon>Actinomycetes</taxon>
        <taxon>Mycobacteriales</taxon>
        <taxon>Mycobacteriaceae</taxon>
        <taxon>Mycobacterium</taxon>
        <taxon>Mycobacterium tuberculosis complex</taxon>
    </lineage>
</organism>
<gene>
    <name evidence="1" type="primary">ispE</name>
    <name type="ordered locus">Rv1011</name>
    <name type="ORF">MTCI237.28</name>
</gene>
<name>ISPE_MYCTU</name>